<feature type="chain" id="PRO_0000355111" description="4-hydroxy-2-oxo-heptane-1,7-dioate aldolase">
    <location>
        <begin position="1"/>
        <end position="263"/>
    </location>
</feature>
<feature type="active site" description="Proton acceptor" evidence="1">
    <location>
        <position position="45"/>
    </location>
</feature>
<feature type="binding site" evidence="1">
    <location>
        <position position="147"/>
    </location>
    <ligand>
        <name>substrate</name>
    </ligand>
</feature>
<feature type="binding site" evidence="1">
    <location>
        <position position="149"/>
    </location>
    <ligand>
        <name>a divalent metal cation</name>
        <dbReference type="ChEBI" id="CHEBI:60240"/>
    </ligand>
</feature>
<feature type="binding site" evidence="1">
    <location>
        <position position="174"/>
    </location>
    <ligand>
        <name>substrate</name>
    </ligand>
</feature>
<feature type="binding site" evidence="1">
    <location>
        <position position="175"/>
    </location>
    <ligand>
        <name>a divalent metal cation</name>
        <dbReference type="ChEBI" id="CHEBI:60240"/>
    </ligand>
</feature>
<feature type="binding site" evidence="1">
    <location>
        <position position="175"/>
    </location>
    <ligand>
        <name>substrate</name>
    </ligand>
</feature>
<feature type="site" description="Transition state stabilizer" evidence="1">
    <location>
        <position position="70"/>
    </location>
</feature>
<feature type="site" description="Increases basicity of active site His" evidence="1">
    <location>
        <position position="84"/>
    </location>
</feature>
<protein>
    <recommendedName>
        <fullName evidence="1">4-hydroxy-2-oxo-heptane-1,7-dioate aldolase</fullName>
        <ecNumber evidence="1">4.1.2.52</ecNumber>
    </recommendedName>
    <alternativeName>
        <fullName evidence="1">2,4-dihydroxyhept-2-ene-1,7-dioic acid aldolase</fullName>
        <shortName evidence="1">HHED aldolase</shortName>
    </alternativeName>
    <alternativeName>
        <fullName evidence="1">4-hydroxy-2-ketoheptane-1,7-dioate aldolase</fullName>
        <shortName evidence="1">HKHD aldolase</shortName>
    </alternativeName>
</protein>
<gene>
    <name evidence="1" type="primary">hpcH</name>
    <name evidence="1" type="synonym">hpaI</name>
    <name type="ordered locus">STM1106</name>
</gene>
<sequence>MKNAFKDALKAGRPQIGLWLGLANSYSAELLAGAGFDWLLIDGEHAPNNVQTVLTQLQAIAPYPSQPVVRPSWNDPVQIKQLLDVGAQTLLIPMVQNADEARNAVAATRYPPAGIRGVGSALARASRWNRIPEYLHLANDAMCVLVQIETREAMSNLASILDVDGIDGVFIGPADLSADMGFAGNPQHPEVQAAIENAIVQIRAAGKAPGILMANEALAKRYLELGALFVAVGVDTTLLARGAEALAARFGVEKKLSGASGVY</sequence>
<reference key="1">
    <citation type="journal article" date="2001" name="Nature">
        <title>Complete genome sequence of Salmonella enterica serovar Typhimurium LT2.</title>
        <authorList>
            <person name="McClelland M."/>
            <person name="Sanderson K.E."/>
            <person name="Spieth J."/>
            <person name="Clifton S.W."/>
            <person name="Latreille P."/>
            <person name="Courtney L."/>
            <person name="Porwollik S."/>
            <person name="Ali J."/>
            <person name="Dante M."/>
            <person name="Du F."/>
            <person name="Hou S."/>
            <person name="Layman D."/>
            <person name="Leonard S."/>
            <person name="Nguyen C."/>
            <person name="Scott K."/>
            <person name="Holmes A."/>
            <person name="Grewal N."/>
            <person name="Mulvaney E."/>
            <person name="Ryan E."/>
            <person name="Sun H."/>
            <person name="Florea L."/>
            <person name="Miller W."/>
            <person name="Stoneking T."/>
            <person name="Nhan M."/>
            <person name="Waterston R."/>
            <person name="Wilson R.K."/>
        </authorList>
    </citation>
    <scope>NUCLEOTIDE SEQUENCE [LARGE SCALE GENOMIC DNA]</scope>
    <source>
        <strain>LT2 / SGSC1412 / ATCC 700720</strain>
    </source>
</reference>
<accession>Q8ZQ47</accession>
<dbReference type="EC" id="4.1.2.52" evidence="1"/>
<dbReference type="EMBL" id="AE006468">
    <property type="protein sequence ID" value="AAL20038.1"/>
    <property type="molecule type" value="Genomic_DNA"/>
</dbReference>
<dbReference type="RefSeq" id="NP_460079.1">
    <property type="nucleotide sequence ID" value="NC_003197.2"/>
</dbReference>
<dbReference type="RefSeq" id="WP_000785072.1">
    <property type="nucleotide sequence ID" value="NC_003197.2"/>
</dbReference>
<dbReference type="SMR" id="Q8ZQ47"/>
<dbReference type="STRING" id="99287.STM1106"/>
<dbReference type="PaxDb" id="99287-STM1106"/>
<dbReference type="GeneID" id="1252624"/>
<dbReference type="KEGG" id="stm:STM1106"/>
<dbReference type="PATRIC" id="fig|99287.12.peg.1170"/>
<dbReference type="HOGENOM" id="CLU_059964_1_0_6"/>
<dbReference type="OMA" id="WNRVDDY"/>
<dbReference type="PhylomeDB" id="Q8ZQ47"/>
<dbReference type="BioCyc" id="SENT99287:STM1106-MONOMER"/>
<dbReference type="UniPathway" id="UPA00208">
    <property type="reaction ID" value="UER00422"/>
</dbReference>
<dbReference type="Proteomes" id="UP000001014">
    <property type="component" value="Chromosome"/>
</dbReference>
<dbReference type="GO" id="GO:0005737">
    <property type="term" value="C:cytoplasm"/>
    <property type="evidence" value="ECO:0000318"/>
    <property type="project" value="GO_Central"/>
</dbReference>
<dbReference type="GO" id="GO:0043863">
    <property type="term" value="F:4-hydroxy-2-ketopimelate aldolase activity"/>
    <property type="evidence" value="ECO:0007669"/>
    <property type="project" value="RHEA"/>
</dbReference>
<dbReference type="GO" id="GO:0016832">
    <property type="term" value="F:aldehyde-lyase activity"/>
    <property type="evidence" value="ECO:0000318"/>
    <property type="project" value="GO_Central"/>
</dbReference>
<dbReference type="GO" id="GO:0046872">
    <property type="term" value="F:metal ion binding"/>
    <property type="evidence" value="ECO:0007669"/>
    <property type="project" value="UniProtKB-UniRule"/>
</dbReference>
<dbReference type="GO" id="GO:1901023">
    <property type="term" value="P:4-hydroxyphenylacetate catabolic process"/>
    <property type="evidence" value="ECO:0007669"/>
    <property type="project" value="UniProtKB-UniRule"/>
</dbReference>
<dbReference type="GO" id="GO:0010124">
    <property type="term" value="P:phenylacetate catabolic process"/>
    <property type="evidence" value="ECO:0007669"/>
    <property type="project" value="InterPro"/>
</dbReference>
<dbReference type="FunFam" id="3.20.20.60:FF:000004">
    <property type="entry name" value="5-keto-4-deoxy-D-glucarate aldolase"/>
    <property type="match status" value="1"/>
</dbReference>
<dbReference type="Gene3D" id="3.20.20.60">
    <property type="entry name" value="Phosphoenolpyruvate-binding domains"/>
    <property type="match status" value="1"/>
</dbReference>
<dbReference type="HAMAP" id="MF_01292">
    <property type="entry name" value="HKHD_aldolase"/>
    <property type="match status" value="1"/>
</dbReference>
<dbReference type="InterPro" id="IPR005000">
    <property type="entry name" value="Aldolase/citrate-lyase_domain"/>
</dbReference>
<dbReference type="InterPro" id="IPR023701">
    <property type="entry name" value="HKHD_aldolase_ent"/>
</dbReference>
<dbReference type="InterPro" id="IPR012689">
    <property type="entry name" value="HpaI"/>
</dbReference>
<dbReference type="InterPro" id="IPR050251">
    <property type="entry name" value="HpcH-HpaI_aldolase"/>
</dbReference>
<dbReference type="InterPro" id="IPR015813">
    <property type="entry name" value="Pyrv/PenolPyrv_kinase-like_dom"/>
</dbReference>
<dbReference type="InterPro" id="IPR040442">
    <property type="entry name" value="Pyrv_kinase-like_dom_sf"/>
</dbReference>
<dbReference type="NCBIfam" id="TIGR02311">
    <property type="entry name" value="HpaI"/>
    <property type="match status" value="1"/>
</dbReference>
<dbReference type="PANTHER" id="PTHR30502">
    <property type="entry name" value="2-KETO-3-DEOXY-L-RHAMNONATE ALDOLASE"/>
    <property type="match status" value="1"/>
</dbReference>
<dbReference type="PANTHER" id="PTHR30502:SF0">
    <property type="entry name" value="PHOSPHOENOLPYRUVATE CARBOXYLASE FAMILY PROTEIN"/>
    <property type="match status" value="1"/>
</dbReference>
<dbReference type="Pfam" id="PF03328">
    <property type="entry name" value="HpcH_HpaI"/>
    <property type="match status" value="1"/>
</dbReference>
<dbReference type="SUPFAM" id="SSF51621">
    <property type="entry name" value="Phosphoenolpyruvate/pyruvate domain"/>
    <property type="match status" value="1"/>
</dbReference>
<comment type="function">
    <text evidence="1">Catalyzes the reversible retro-aldol cleavage of 4-hydroxy-2-ketoheptane-1,7-dioate (HKHD) to pyruvate and succinic semialdehyde.</text>
</comment>
<comment type="catalytic activity">
    <reaction evidence="1">
        <text>4-hydroxy-2-oxoheptanedioate = succinate semialdehyde + pyruvate</text>
        <dbReference type="Rhea" id="RHEA:25788"/>
        <dbReference type="ChEBI" id="CHEBI:15361"/>
        <dbReference type="ChEBI" id="CHEBI:57706"/>
        <dbReference type="ChEBI" id="CHEBI:73036"/>
        <dbReference type="EC" id="4.1.2.52"/>
    </reaction>
</comment>
<comment type="cofactor">
    <cofactor evidence="1">
        <name>a divalent metal cation</name>
        <dbReference type="ChEBI" id="CHEBI:60240"/>
    </cofactor>
    <text evidence="1">Binds 1 divalent metal cation per subunit.</text>
</comment>
<comment type="pathway">
    <text evidence="1">Aromatic compound metabolism; 4-hydroxyphenylacetate degradation; pyruvate and succinate semialdehyde from 4-hydroxyphenylacetate: step 7/7.</text>
</comment>
<comment type="subunit">
    <text evidence="1">Homohexamer; trimer of dimers.</text>
</comment>
<comment type="similarity">
    <text evidence="1">Belongs to the HpcH/HpaI aldolase family.</text>
</comment>
<name>HPCH_SALTY</name>
<proteinExistence type="inferred from homology"/>
<organism>
    <name type="scientific">Salmonella typhimurium (strain LT2 / SGSC1412 / ATCC 700720)</name>
    <dbReference type="NCBI Taxonomy" id="99287"/>
    <lineage>
        <taxon>Bacteria</taxon>
        <taxon>Pseudomonadati</taxon>
        <taxon>Pseudomonadota</taxon>
        <taxon>Gammaproteobacteria</taxon>
        <taxon>Enterobacterales</taxon>
        <taxon>Enterobacteriaceae</taxon>
        <taxon>Salmonella</taxon>
    </lineage>
</organism>
<evidence type="ECO:0000255" key="1">
    <source>
        <dbReference type="HAMAP-Rule" id="MF_01292"/>
    </source>
</evidence>
<keyword id="KW-0058">Aromatic hydrocarbons catabolism</keyword>
<keyword id="KW-0456">Lyase</keyword>
<keyword id="KW-0479">Metal-binding</keyword>
<keyword id="KW-1185">Reference proteome</keyword>